<proteinExistence type="inferred from homology"/>
<evidence type="ECO:0000250" key="1"/>
<evidence type="ECO:0000305" key="2"/>
<comment type="function">
    <text evidence="1">Manganese-dependent repressor that controls a regulon of oxidative stress resistance and iron-storage proteins. May act as a hydrogen peroxide and organic hydroperoxide sensor (By similarity).</text>
</comment>
<comment type="subcellular location">
    <subcellularLocation>
        <location evidence="1">Cytoplasm</location>
    </subcellularLocation>
</comment>
<comment type="similarity">
    <text evidence="2">Belongs to the Fur family.</text>
</comment>
<name>PERR_STAAR</name>
<dbReference type="EMBL" id="BX571856">
    <property type="protein sequence ID" value="CAG40938.1"/>
    <property type="molecule type" value="Genomic_DNA"/>
</dbReference>
<dbReference type="RefSeq" id="WP_000110011.1">
    <property type="nucleotide sequence ID" value="NC_002952.2"/>
</dbReference>
<dbReference type="SMR" id="Q6GFJ6"/>
<dbReference type="GeneID" id="98346243"/>
<dbReference type="KEGG" id="sar:SAR1951"/>
<dbReference type="HOGENOM" id="CLU_096072_4_2_9"/>
<dbReference type="Proteomes" id="UP000000596">
    <property type="component" value="Chromosome"/>
</dbReference>
<dbReference type="GO" id="GO:0005737">
    <property type="term" value="C:cytoplasm"/>
    <property type="evidence" value="ECO:0007669"/>
    <property type="project" value="UniProtKB-SubCell"/>
</dbReference>
<dbReference type="GO" id="GO:0003700">
    <property type="term" value="F:DNA-binding transcription factor activity"/>
    <property type="evidence" value="ECO:0007669"/>
    <property type="project" value="InterPro"/>
</dbReference>
<dbReference type="GO" id="GO:0000976">
    <property type="term" value="F:transcription cis-regulatory region binding"/>
    <property type="evidence" value="ECO:0007669"/>
    <property type="project" value="TreeGrafter"/>
</dbReference>
<dbReference type="GO" id="GO:0008270">
    <property type="term" value="F:zinc ion binding"/>
    <property type="evidence" value="ECO:0007669"/>
    <property type="project" value="TreeGrafter"/>
</dbReference>
<dbReference type="GO" id="GO:0045892">
    <property type="term" value="P:negative regulation of DNA-templated transcription"/>
    <property type="evidence" value="ECO:0007669"/>
    <property type="project" value="TreeGrafter"/>
</dbReference>
<dbReference type="GO" id="GO:1900376">
    <property type="term" value="P:regulation of secondary metabolite biosynthetic process"/>
    <property type="evidence" value="ECO:0007669"/>
    <property type="project" value="TreeGrafter"/>
</dbReference>
<dbReference type="CDD" id="cd07153">
    <property type="entry name" value="Fur_like"/>
    <property type="match status" value="1"/>
</dbReference>
<dbReference type="FunFam" id="1.10.10.10:FF:000147">
    <property type="entry name" value="Fur family transcriptional regulator"/>
    <property type="match status" value="1"/>
</dbReference>
<dbReference type="FunFam" id="3.30.1490.190:FF:000003">
    <property type="entry name" value="Fur family transcriptional regulator"/>
    <property type="match status" value="1"/>
</dbReference>
<dbReference type="Gene3D" id="3.30.1490.190">
    <property type="match status" value="1"/>
</dbReference>
<dbReference type="Gene3D" id="1.10.10.10">
    <property type="entry name" value="Winged helix-like DNA-binding domain superfamily/Winged helix DNA-binding domain"/>
    <property type="match status" value="1"/>
</dbReference>
<dbReference type="InterPro" id="IPR002481">
    <property type="entry name" value="FUR"/>
</dbReference>
<dbReference type="InterPro" id="IPR043135">
    <property type="entry name" value="Fur_C"/>
</dbReference>
<dbReference type="InterPro" id="IPR036388">
    <property type="entry name" value="WH-like_DNA-bd_sf"/>
</dbReference>
<dbReference type="InterPro" id="IPR036390">
    <property type="entry name" value="WH_DNA-bd_sf"/>
</dbReference>
<dbReference type="PANTHER" id="PTHR33202:SF8">
    <property type="entry name" value="PEROXIDE-RESPONSIVE REPRESSOR PERR"/>
    <property type="match status" value="1"/>
</dbReference>
<dbReference type="PANTHER" id="PTHR33202">
    <property type="entry name" value="ZINC UPTAKE REGULATION PROTEIN"/>
    <property type="match status" value="1"/>
</dbReference>
<dbReference type="Pfam" id="PF01475">
    <property type="entry name" value="FUR"/>
    <property type="match status" value="1"/>
</dbReference>
<dbReference type="SUPFAM" id="SSF46785">
    <property type="entry name" value="Winged helix' DNA-binding domain"/>
    <property type="match status" value="1"/>
</dbReference>
<accession>Q6GFJ6</accession>
<keyword id="KW-0963">Cytoplasm</keyword>
<keyword id="KW-0238">DNA-binding</keyword>
<keyword id="KW-0464">Manganese</keyword>
<keyword id="KW-0479">Metal-binding</keyword>
<keyword id="KW-0678">Repressor</keyword>
<keyword id="KW-0804">Transcription</keyword>
<keyword id="KW-0805">Transcription regulation</keyword>
<keyword id="KW-0862">Zinc</keyword>
<reference key="1">
    <citation type="journal article" date="2004" name="Proc. Natl. Acad. Sci. U.S.A.">
        <title>Complete genomes of two clinical Staphylococcus aureus strains: evidence for the rapid evolution of virulence and drug resistance.</title>
        <authorList>
            <person name="Holden M.T.G."/>
            <person name="Feil E.J."/>
            <person name="Lindsay J.A."/>
            <person name="Peacock S.J."/>
            <person name="Day N.P.J."/>
            <person name="Enright M.C."/>
            <person name="Foster T.J."/>
            <person name="Moore C.E."/>
            <person name="Hurst L."/>
            <person name="Atkin R."/>
            <person name="Barron A."/>
            <person name="Bason N."/>
            <person name="Bentley S.D."/>
            <person name="Chillingworth C."/>
            <person name="Chillingworth T."/>
            <person name="Churcher C."/>
            <person name="Clark L."/>
            <person name="Corton C."/>
            <person name="Cronin A."/>
            <person name="Doggett J."/>
            <person name="Dowd L."/>
            <person name="Feltwell T."/>
            <person name="Hance Z."/>
            <person name="Harris B."/>
            <person name="Hauser H."/>
            <person name="Holroyd S."/>
            <person name="Jagels K."/>
            <person name="James K.D."/>
            <person name="Lennard N."/>
            <person name="Line A."/>
            <person name="Mayes R."/>
            <person name="Moule S."/>
            <person name="Mungall K."/>
            <person name="Ormond D."/>
            <person name="Quail M.A."/>
            <person name="Rabbinowitsch E."/>
            <person name="Rutherford K.M."/>
            <person name="Sanders M."/>
            <person name="Sharp S."/>
            <person name="Simmonds M."/>
            <person name="Stevens K."/>
            <person name="Whitehead S."/>
            <person name="Barrell B.G."/>
            <person name="Spratt B.G."/>
            <person name="Parkhill J."/>
        </authorList>
    </citation>
    <scope>NUCLEOTIDE SEQUENCE [LARGE SCALE GENOMIC DNA]</scope>
    <source>
        <strain>MRSA252</strain>
    </source>
</reference>
<protein>
    <recommendedName>
        <fullName>Peroxide-responsive repressor PerR</fullName>
    </recommendedName>
</protein>
<sequence>MSVEIESIEHELEESIASLRQAGVRITPQRQAILRYLISSHTHPTADEIYQALSPDFPNISVATIYNNLRVFKDIGIVKELTYGDSSSRFDFNTHNHYHIICEQCGKIVDFQYPQLNEIERLAQHMTDFDVTHHRMEIYGVCKECQDK</sequence>
<feature type="chain" id="PRO_0000289012" description="Peroxide-responsive repressor PerR">
    <location>
        <begin position="1"/>
        <end position="148"/>
    </location>
</feature>
<feature type="region of interest" description="DNA-binding" evidence="1">
    <location>
        <begin position="1"/>
        <end position="84"/>
    </location>
</feature>
<feature type="binding site" evidence="1">
    <location>
        <position position="102"/>
    </location>
    <ligand>
        <name>Zn(2+)</name>
        <dbReference type="ChEBI" id="CHEBI:29105"/>
    </ligand>
</feature>
<feature type="binding site" evidence="1">
    <location>
        <position position="105"/>
    </location>
    <ligand>
        <name>Zn(2+)</name>
        <dbReference type="ChEBI" id="CHEBI:29105"/>
    </ligand>
</feature>
<feature type="binding site" evidence="1">
    <location>
        <position position="142"/>
    </location>
    <ligand>
        <name>Zn(2+)</name>
        <dbReference type="ChEBI" id="CHEBI:29105"/>
    </ligand>
</feature>
<feature type="binding site" evidence="1">
    <location>
        <position position="145"/>
    </location>
    <ligand>
        <name>Zn(2+)</name>
        <dbReference type="ChEBI" id="CHEBI:29105"/>
    </ligand>
</feature>
<organism>
    <name type="scientific">Staphylococcus aureus (strain MRSA252)</name>
    <dbReference type="NCBI Taxonomy" id="282458"/>
    <lineage>
        <taxon>Bacteria</taxon>
        <taxon>Bacillati</taxon>
        <taxon>Bacillota</taxon>
        <taxon>Bacilli</taxon>
        <taxon>Bacillales</taxon>
        <taxon>Staphylococcaceae</taxon>
        <taxon>Staphylococcus</taxon>
    </lineage>
</organism>
<gene>
    <name type="primary">perR</name>
    <name type="ordered locus">SAR1951</name>
</gene>